<accession>Q3J8K3</accession>
<protein>
    <recommendedName>
        <fullName evidence="1">Inner membrane-spanning protein YciB</fullName>
    </recommendedName>
</protein>
<sequence>MKLFFDLFPIILFFAAYQLYDQLPPDIVAGLDRIPFLVLIPGAPENAILFATAIAILASVLQVGLYFFKHHRFESMHLVTLGLVVVLGGATLMFRDPTFIKWKPTVVNWLFGLAFLASQLFTRKPLVQRMMSTAITLPTSIWNRLNGAWIIFFLVSGLANLYVAYAFTEAVWVNFKLFGMLGLTLLFVVGQAFYLTRYLNPSED</sequence>
<organism>
    <name type="scientific">Nitrosococcus oceani (strain ATCC 19707 / BCRC 17464 / JCM 30415 / NCIMB 11848 / C-107)</name>
    <dbReference type="NCBI Taxonomy" id="323261"/>
    <lineage>
        <taxon>Bacteria</taxon>
        <taxon>Pseudomonadati</taxon>
        <taxon>Pseudomonadota</taxon>
        <taxon>Gammaproteobacteria</taxon>
        <taxon>Chromatiales</taxon>
        <taxon>Chromatiaceae</taxon>
        <taxon>Nitrosococcus</taxon>
    </lineage>
</organism>
<reference key="1">
    <citation type="journal article" date="2006" name="Appl. Environ. Microbiol.">
        <title>Complete genome sequence of the marine, chemolithoautotrophic, ammonia-oxidizing bacterium Nitrosococcus oceani ATCC 19707.</title>
        <authorList>
            <person name="Klotz M.G."/>
            <person name="Arp D.J."/>
            <person name="Chain P.S.G."/>
            <person name="El-Sheikh A.F."/>
            <person name="Hauser L.J."/>
            <person name="Hommes N.G."/>
            <person name="Larimer F.W."/>
            <person name="Malfatti S.A."/>
            <person name="Norton J.M."/>
            <person name="Poret-Peterson A.T."/>
            <person name="Vergez L.M."/>
            <person name="Ward B.B."/>
        </authorList>
    </citation>
    <scope>NUCLEOTIDE SEQUENCE [LARGE SCALE GENOMIC DNA]</scope>
    <source>
        <strain>ATCC 19707 / BCRC 17464 / JCM 30415 / NCIMB 11848 / C-107</strain>
    </source>
</reference>
<feature type="chain" id="PRO_1000021036" description="Inner membrane-spanning protein YciB">
    <location>
        <begin position="1"/>
        <end position="204"/>
    </location>
</feature>
<feature type="transmembrane region" description="Helical" evidence="1">
    <location>
        <begin position="48"/>
        <end position="68"/>
    </location>
</feature>
<feature type="transmembrane region" description="Helical" evidence="1">
    <location>
        <begin position="73"/>
        <end position="93"/>
    </location>
</feature>
<feature type="transmembrane region" description="Helical" evidence="1">
    <location>
        <begin position="102"/>
        <end position="122"/>
    </location>
</feature>
<feature type="transmembrane region" description="Helical" evidence="1">
    <location>
        <begin position="147"/>
        <end position="167"/>
    </location>
</feature>
<feature type="transmembrane region" description="Helical" evidence="1">
    <location>
        <begin position="170"/>
        <end position="190"/>
    </location>
</feature>
<comment type="function">
    <text evidence="1">Plays a role in cell envelope biogenesis, maintenance of cell envelope integrity and membrane homeostasis.</text>
</comment>
<comment type="subcellular location">
    <subcellularLocation>
        <location evidence="1">Cell inner membrane</location>
        <topology evidence="1">Multi-pass membrane protein</topology>
    </subcellularLocation>
</comment>
<comment type="similarity">
    <text evidence="1">Belongs to the YciB family.</text>
</comment>
<keyword id="KW-0997">Cell inner membrane</keyword>
<keyword id="KW-1003">Cell membrane</keyword>
<keyword id="KW-0472">Membrane</keyword>
<keyword id="KW-1185">Reference proteome</keyword>
<keyword id="KW-0812">Transmembrane</keyword>
<keyword id="KW-1133">Transmembrane helix</keyword>
<evidence type="ECO:0000255" key="1">
    <source>
        <dbReference type="HAMAP-Rule" id="MF_00189"/>
    </source>
</evidence>
<name>YCIB_NITOC</name>
<dbReference type="EMBL" id="CP000127">
    <property type="protein sequence ID" value="ABA58843.1"/>
    <property type="molecule type" value="Genomic_DNA"/>
</dbReference>
<dbReference type="RefSeq" id="WP_002811256.1">
    <property type="nucleotide sequence ID" value="NC_007484.1"/>
</dbReference>
<dbReference type="FunCoup" id="Q3J8K3">
    <property type="interactions" value="95"/>
</dbReference>
<dbReference type="STRING" id="323261.Noc_2385"/>
<dbReference type="KEGG" id="noc:Noc_2385"/>
<dbReference type="eggNOG" id="COG2917">
    <property type="taxonomic scope" value="Bacteria"/>
</dbReference>
<dbReference type="HOGENOM" id="CLU_089554_2_0_6"/>
<dbReference type="InParanoid" id="Q3J8K3"/>
<dbReference type="Proteomes" id="UP000006838">
    <property type="component" value="Chromosome"/>
</dbReference>
<dbReference type="GO" id="GO:0005886">
    <property type="term" value="C:plasma membrane"/>
    <property type="evidence" value="ECO:0007669"/>
    <property type="project" value="UniProtKB-SubCell"/>
</dbReference>
<dbReference type="HAMAP" id="MF_00189">
    <property type="entry name" value="YciB"/>
    <property type="match status" value="1"/>
</dbReference>
<dbReference type="InterPro" id="IPR006008">
    <property type="entry name" value="YciB"/>
</dbReference>
<dbReference type="NCBIfam" id="NF001325">
    <property type="entry name" value="PRK00259.1-3"/>
    <property type="match status" value="1"/>
</dbReference>
<dbReference type="PANTHER" id="PTHR36917:SF1">
    <property type="entry name" value="INNER MEMBRANE-SPANNING PROTEIN YCIB"/>
    <property type="match status" value="1"/>
</dbReference>
<dbReference type="PANTHER" id="PTHR36917">
    <property type="entry name" value="INTRACELLULAR SEPTATION PROTEIN A-RELATED"/>
    <property type="match status" value="1"/>
</dbReference>
<dbReference type="Pfam" id="PF04279">
    <property type="entry name" value="IspA"/>
    <property type="match status" value="1"/>
</dbReference>
<proteinExistence type="inferred from homology"/>
<gene>
    <name evidence="1" type="primary">yciB</name>
    <name type="ordered locus">Noc_2385</name>
</gene>